<accession>C5D5L5</accession>
<keyword id="KW-0131">Cell cycle</keyword>
<keyword id="KW-0132">Cell division</keyword>
<keyword id="KW-0143">Chaperone</keyword>
<keyword id="KW-0963">Cytoplasm</keyword>
<keyword id="KW-0413">Isomerase</keyword>
<keyword id="KW-0697">Rotamase</keyword>
<protein>
    <recommendedName>
        <fullName evidence="1">Trigger factor</fullName>
        <shortName evidence="1">TF</shortName>
        <ecNumber evidence="1">5.2.1.8</ecNumber>
    </recommendedName>
    <alternativeName>
        <fullName evidence="1">PPIase</fullName>
    </alternativeName>
</protein>
<evidence type="ECO:0000255" key="1">
    <source>
        <dbReference type="HAMAP-Rule" id="MF_00303"/>
    </source>
</evidence>
<gene>
    <name evidence="1" type="primary">tig</name>
    <name type="ordered locus">GWCH70_2588</name>
</gene>
<organism>
    <name type="scientific">Geobacillus sp. (strain WCH70)</name>
    <dbReference type="NCBI Taxonomy" id="471223"/>
    <lineage>
        <taxon>Bacteria</taxon>
        <taxon>Bacillati</taxon>
        <taxon>Bacillota</taxon>
        <taxon>Bacilli</taxon>
        <taxon>Bacillales</taxon>
        <taxon>Anoxybacillaceae</taxon>
        <taxon>Geobacillus</taxon>
    </lineage>
</organism>
<reference key="1">
    <citation type="submission" date="2009-06" db="EMBL/GenBank/DDBJ databases">
        <title>Complete sequence of chromosome of Geopacillus sp. WCH70.</title>
        <authorList>
            <consortium name="US DOE Joint Genome Institute"/>
            <person name="Lucas S."/>
            <person name="Copeland A."/>
            <person name="Lapidus A."/>
            <person name="Glavina del Rio T."/>
            <person name="Dalin E."/>
            <person name="Tice H."/>
            <person name="Bruce D."/>
            <person name="Goodwin L."/>
            <person name="Pitluck S."/>
            <person name="Chertkov O."/>
            <person name="Brettin T."/>
            <person name="Detter J.C."/>
            <person name="Han C."/>
            <person name="Larimer F."/>
            <person name="Land M."/>
            <person name="Hauser L."/>
            <person name="Kyrpides N."/>
            <person name="Mikhailova N."/>
            <person name="Brumm P."/>
            <person name="Mead D.A."/>
            <person name="Richardson P."/>
        </authorList>
    </citation>
    <scope>NUCLEOTIDE SEQUENCE [LARGE SCALE GENOMIC DNA]</scope>
    <source>
        <strain>WCH70</strain>
    </source>
</reference>
<proteinExistence type="inferred from homology"/>
<sequence length="428" mass="48465">MSVKWEKLEGNEGVLTVEVDAEKVNEGLDAAFKKVVKNIAIPGFRKGKVPRVIFEKRFGVEALYQDALDILLPEAYAKAVEEAGIEPVDVPKIDIEQMEKGKSLIFTAKVTVKPEVKLGQYKGLEVEKMDDTVTDEDVENELKRLQENYAELVVKEDGKVENGDTAVIDFEGFVDGEPFEGGKAENYSLEIGSGTFIPGFEDQLIGMQAGEEKEIEVTFPEEYHAKELAGKPATFKVKVHEIKEKRLPALDDEFAKDVDDEVETLEQLKDKIRKRLEEMKKNEAEAALRDAVVEKAAENAEIDIPEVMVKNETDRMLREFDQRLQMQGLNLELYYQFSGQDEAALREQMKEDAEKRVRVALTIEAIAKAENIEVTEEEINEELEKMAKAYNLEVEKLKELLGNLDGVKEDLKWRKTIDFLVENSKVAA</sequence>
<comment type="function">
    <text evidence="1">Involved in protein export. Acts as a chaperone by maintaining the newly synthesized protein in an open conformation. Functions as a peptidyl-prolyl cis-trans isomerase.</text>
</comment>
<comment type="catalytic activity">
    <reaction evidence="1">
        <text>[protein]-peptidylproline (omega=180) = [protein]-peptidylproline (omega=0)</text>
        <dbReference type="Rhea" id="RHEA:16237"/>
        <dbReference type="Rhea" id="RHEA-COMP:10747"/>
        <dbReference type="Rhea" id="RHEA-COMP:10748"/>
        <dbReference type="ChEBI" id="CHEBI:83833"/>
        <dbReference type="ChEBI" id="CHEBI:83834"/>
        <dbReference type="EC" id="5.2.1.8"/>
    </reaction>
</comment>
<comment type="subcellular location">
    <subcellularLocation>
        <location>Cytoplasm</location>
    </subcellularLocation>
    <text evidence="1">About half TF is bound to the ribosome near the polypeptide exit tunnel while the other half is free in the cytoplasm.</text>
</comment>
<comment type="domain">
    <text evidence="1">Consists of 3 domains; the N-terminus binds the ribosome, the middle domain has PPIase activity, while the C-terminus has intrinsic chaperone activity on its own.</text>
</comment>
<comment type="similarity">
    <text evidence="1">Belongs to the FKBP-type PPIase family. Tig subfamily.</text>
</comment>
<feature type="chain" id="PRO_1000204991" description="Trigger factor">
    <location>
        <begin position="1"/>
        <end position="428"/>
    </location>
</feature>
<feature type="domain" description="PPIase FKBP-type" evidence="1">
    <location>
        <begin position="163"/>
        <end position="248"/>
    </location>
</feature>
<dbReference type="EC" id="5.2.1.8" evidence="1"/>
<dbReference type="EMBL" id="CP001638">
    <property type="protein sequence ID" value="ACS25283.1"/>
    <property type="molecule type" value="Genomic_DNA"/>
</dbReference>
<dbReference type="SMR" id="C5D5L5"/>
<dbReference type="STRING" id="471223.GWCH70_2588"/>
<dbReference type="KEGG" id="gwc:GWCH70_2588"/>
<dbReference type="eggNOG" id="COG0544">
    <property type="taxonomic scope" value="Bacteria"/>
</dbReference>
<dbReference type="HOGENOM" id="CLU_033058_3_2_9"/>
<dbReference type="OrthoDB" id="9767721at2"/>
<dbReference type="GO" id="GO:0005737">
    <property type="term" value="C:cytoplasm"/>
    <property type="evidence" value="ECO:0007669"/>
    <property type="project" value="UniProtKB-SubCell"/>
</dbReference>
<dbReference type="GO" id="GO:0003755">
    <property type="term" value="F:peptidyl-prolyl cis-trans isomerase activity"/>
    <property type="evidence" value="ECO:0007669"/>
    <property type="project" value="UniProtKB-UniRule"/>
</dbReference>
<dbReference type="GO" id="GO:0044183">
    <property type="term" value="F:protein folding chaperone"/>
    <property type="evidence" value="ECO:0007669"/>
    <property type="project" value="TreeGrafter"/>
</dbReference>
<dbReference type="GO" id="GO:0043022">
    <property type="term" value="F:ribosome binding"/>
    <property type="evidence" value="ECO:0007669"/>
    <property type="project" value="TreeGrafter"/>
</dbReference>
<dbReference type="GO" id="GO:0051083">
    <property type="term" value="P:'de novo' cotranslational protein folding"/>
    <property type="evidence" value="ECO:0007669"/>
    <property type="project" value="TreeGrafter"/>
</dbReference>
<dbReference type="GO" id="GO:0051301">
    <property type="term" value="P:cell division"/>
    <property type="evidence" value="ECO:0007669"/>
    <property type="project" value="UniProtKB-KW"/>
</dbReference>
<dbReference type="GO" id="GO:0061077">
    <property type="term" value="P:chaperone-mediated protein folding"/>
    <property type="evidence" value="ECO:0007669"/>
    <property type="project" value="TreeGrafter"/>
</dbReference>
<dbReference type="GO" id="GO:0015031">
    <property type="term" value="P:protein transport"/>
    <property type="evidence" value="ECO:0007669"/>
    <property type="project" value="UniProtKB-UniRule"/>
</dbReference>
<dbReference type="GO" id="GO:0043335">
    <property type="term" value="P:protein unfolding"/>
    <property type="evidence" value="ECO:0007669"/>
    <property type="project" value="TreeGrafter"/>
</dbReference>
<dbReference type="FunFam" id="3.10.50.40:FF:000001">
    <property type="entry name" value="Trigger factor"/>
    <property type="match status" value="1"/>
</dbReference>
<dbReference type="FunFam" id="3.30.70.1050:FF:000002">
    <property type="entry name" value="Trigger factor"/>
    <property type="match status" value="1"/>
</dbReference>
<dbReference type="Gene3D" id="3.10.50.40">
    <property type="match status" value="1"/>
</dbReference>
<dbReference type="Gene3D" id="3.30.70.1050">
    <property type="entry name" value="Trigger factor ribosome-binding domain"/>
    <property type="match status" value="1"/>
</dbReference>
<dbReference type="Gene3D" id="1.10.3120.10">
    <property type="entry name" value="Trigger factor, C-terminal domain"/>
    <property type="match status" value="1"/>
</dbReference>
<dbReference type="HAMAP" id="MF_00303">
    <property type="entry name" value="Trigger_factor_Tig"/>
    <property type="match status" value="1"/>
</dbReference>
<dbReference type="InterPro" id="IPR046357">
    <property type="entry name" value="PPIase_dom_sf"/>
</dbReference>
<dbReference type="InterPro" id="IPR001179">
    <property type="entry name" value="PPIase_FKBP_dom"/>
</dbReference>
<dbReference type="InterPro" id="IPR005215">
    <property type="entry name" value="Trig_fac"/>
</dbReference>
<dbReference type="InterPro" id="IPR008880">
    <property type="entry name" value="Trigger_fac_C"/>
</dbReference>
<dbReference type="InterPro" id="IPR037041">
    <property type="entry name" value="Trigger_fac_C_sf"/>
</dbReference>
<dbReference type="InterPro" id="IPR008881">
    <property type="entry name" value="Trigger_fac_ribosome-bd_bac"/>
</dbReference>
<dbReference type="InterPro" id="IPR036611">
    <property type="entry name" value="Trigger_fac_ribosome-bd_sf"/>
</dbReference>
<dbReference type="InterPro" id="IPR027304">
    <property type="entry name" value="Trigger_fact/SurA_dom_sf"/>
</dbReference>
<dbReference type="NCBIfam" id="TIGR00115">
    <property type="entry name" value="tig"/>
    <property type="match status" value="1"/>
</dbReference>
<dbReference type="PANTHER" id="PTHR30560">
    <property type="entry name" value="TRIGGER FACTOR CHAPERONE AND PEPTIDYL-PROLYL CIS/TRANS ISOMERASE"/>
    <property type="match status" value="1"/>
</dbReference>
<dbReference type="PANTHER" id="PTHR30560:SF3">
    <property type="entry name" value="TRIGGER FACTOR-LIKE PROTEIN TIG, CHLOROPLASTIC"/>
    <property type="match status" value="1"/>
</dbReference>
<dbReference type="Pfam" id="PF00254">
    <property type="entry name" value="FKBP_C"/>
    <property type="match status" value="1"/>
</dbReference>
<dbReference type="Pfam" id="PF05698">
    <property type="entry name" value="Trigger_C"/>
    <property type="match status" value="1"/>
</dbReference>
<dbReference type="Pfam" id="PF05697">
    <property type="entry name" value="Trigger_N"/>
    <property type="match status" value="1"/>
</dbReference>
<dbReference type="PIRSF" id="PIRSF003095">
    <property type="entry name" value="Trigger_factor"/>
    <property type="match status" value="1"/>
</dbReference>
<dbReference type="SUPFAM" id="SSF54534">
    <property type="entry name" value="FKBP-like"/>
    <property type="match status" value="1"/>
</dbReference>
<dbReference type="SUPFAM" id="SSF109998">
    <property type="entry name" value="Triger factor/SurA peptide-binding domain-like"/>
    <property type="match status" value="1"/>
</dbReference>
<dbReference type="SUPFAM" id="SSF102735">
    <property type="entry name" value="Trigger factor ribosome-binding domain"/>
    <property type="match status" value="1"/>
</dbReference>
<dbReference type="PROSITE" id="PS50059">
    <property type="entry name" value="FKBP_PPIASE"/>
    <property type="match status" value="1"/>
</dbReference>
<name>TIG_GEOSW</name>